<reference key="1">
    <citation type="journal article" date="2005" name="J. Biosci. Bioeng.">
        <title>Organization and localization of the dnaA and dnaK gene regions on the multichromosomal genome of Burkholderia multivorans ATCC 17616.</title>
        <authorList>
            <person name="Nagata Y."/>
            <person name="Matsuda M."/>
            <person name="Komatsu H."/>
            <person name="Imura Y."/>
            <person name="Sawada H."/>
            <person name="Ohtsubo Y."/>
            <person name="Tsuda M."/>
        </authorList>
    </citation>
    <scope>NUCLEOTIDE SEQUENCE [GENOMIC DNA]</scope>
</reference>
<reference key="2">
    <citation type="submission" date="2007-10" db="EMBL/GenBank/DDBJ databases">
        <title>Complete sequence of chromosome 1 of Burkholderia multivorans ATCC 17616.</title>
        <authorList>
            <person name="Copeland A."/>
            <person name="Lucas S."/>
            <person name="Lapidus A."/>
            <person name="Barry K."/>
            <person name="Glavina del Rio T."/>
            <person name="Dalin E."/>
            <person name="Tice H."/>
            <person name="Pitluck S."/>
            <person name="Chain P."/>
            <person name="Malfatti S."/>
            <person name="Shin M."/>
            <person name="Vergez L."/>
            <person name="Schmutz J."/>
            <person name="Larimer F."/>
            <person name="Land M."/>
            <person name="Hauser L."/>
            <person name="Kyrpides N."/>
            <person name="Kim E."/>
            <person name="Tiedje J."/>
            <person name="Richardson P."/>
        </authorList>
    </citation>
    <scope>NUCLEOTIDE SEQUENCE [LARGE SCALE GENOMIC DNA]</scope>
    <source>
        <strain>ATCC 17616 / 249</strain>
    </source>
</reference>
<reference key="3">
    <citation type="submission" date="2007-04" db="EMBL/GenBank/DDBJ databases">
        <title>Complete genome sequence of Burkholderia multivorans ATCC 17616.</title>
        <authorList>
            <person name="Ohtsubo Y."/>
            <person name="Yamashita A."/>
            <person name="Kurokawa K."/>
            <person name="Takami H."/>
            <person name="Yuhara S."/>
            <person name="Nishiyama E."/>
            <person name="Endo R."/>
            <person name="Miyazaki R."/>
            <person name="Ono A."/>
            <person name="Yano K."/>
            <person name="Ito M."/>
            <person name="Sota M."/>
            <person name="Yuji N."/>
            <person name="Hattori M."/>
            <person name="Tsuda M."/>
        </authorList>
    </citation>
    <scope>NUCLEOTIDE SEQUENCE [LARGE SCALE GENOMIC DNA]</scope>
    <source>
        <strain>ATCC 17616 / 249</strain>
    </source>
</reference>
<gene>
    <name evidence="1" type="primary">dnaJ</name>
    <name type="ordered locus">Bmul_2632</name>
    <name type="ordered locus">BMULJ_00606</name>
</gene>
<evidence type="ECO:0000255" key="1">
    <source>
        <dbReference type="HAMAP-Rule" id="MF_01152"/>
    </source>
</evidence>
<name>DNAJ_BURM1</name>
<organism>
    <name type="scientific">Burkholderia multivorans (strain ATCC 17616 / 249)</name>
    <dbReference type="NCBI Taxonomy" id="395019"/>
    <lineage>
        <taxon>Bacteria</taxon>
        <taxon>Pseudomonadati</taxon>
        <taxon>Pseudomonadota</taxon>
        <taxon>Betaproteobacteria</taxon>
        <taxon>Burkholderiales</taxon>
        <taxon>Burkholderiaceae</taxon>
        <taxon>Burkholderia</taxon>
        <taxon>Burkholderia cepacia complex</taxon>
    </lineage>
</organism>
<accession>Q5NSW9</accession>
<accession>A9AGB7</accession>
<feature type="chain" id="PRO_0000070749" description="Chaperone protein DnaJ">
    <location>
        <begin position="1"/>
        <end position="376"/>
    </location>
</feature>
<feature type="domain" description="J" evidence="1">
    <location>
        <begin position="5"/>
        <end position="70"/>
    </location>
</feature>
<feature type="repeat" description="CXXCXGXG motif">
    <location>
        <begin position="149"/>
        <end position="156"/>
    </location>
</feature>
<feature type="repeat" description="CXXCXGXG motif">
    <location>
        <begin position="166"/>
        <end position="173"/>
    </location>
</feature>
<feature type="repeat" description="CXXCXGXG motif">
    <location>
        <begin position="188"/>
        <end position="195"/>
    </location>
</feature>
<feature type="repeat" description="CXXCXGXG motif">
    <location>
        <begin position="202"/>
        <end position="209"/>
    </location>
</feature>
<feature type="zinc finger region" description="CR-type" evidence="1">
    <location>
        <begin position="136"/>
        <end position="214"/>
    </location>
</feature>
<feature type="binding site" evidence="1">
    <location>
        <position position="149"/>
    </location>
    <ligand>
        <name>Zn(2+)</name>
        <dbReference type="ChEBI" id="CHEBI:29105"/>
        <label>1</label>
    </ligand>
</feature>
<feature type="binding site" evidence="1">
    <location>
        <position position="152"/>
    </location>
    <ligand>
        <name>Zn(2+)</name>
        <dbReference type="ChEBI" id="CHEBI:29105"/>
        <label>1</label>
    </ligand>
</feature>
<feature type="binding site" evidence="1">
    <location>
        <position position="166"/>
    </location>
    <ligand>
        <name>Zn(2+)</name>
        <dbReference type="ChEBI" id="CHEBI:29105"/>
        <label>2</label>
    </ligand>
</feature>
<feature type="binding site" evidence="1">
    <location>
        <position position="169"/>
    </location>
    <ligand>
        <name>Zn(2+)</name>
        <dbReference type="ChEBI" id="CHEBI:29105"/>
        <label>2</label>
    </ligand>
</feature>
<feature type="binding site" evidence="1">
    <location>
        <position position="188"/>
    </location>
    <ligand>
        <name>Zn(2+)</name>
        <dbReference type="ChEBI" id="CHEBI:29105"/>
        <label>2</label>
    </ligand>
</feature>
<feature type="binding site" evidence="1">
    <location>
        <position position="191"/>
    </location>
    <ligand>
        <name>Zn(2+)</name>
        <dbReference type="ChEBI" id="CHEBI:29105"/>
        <label>2</label>
    </ligand>
</feature>
<feature type="binding site" evidence="1">
    <location>
        <position position="202"/>
    </location>
    <ligand>
        <name>Zn(2+)</name>
        <dbReference type="ChEBI" id="CHEBI:29105"/>
        <label>1</label>
    </ligand>
</feature>
<feature type="binding site" evidence="1">
    <location>
        <position position="205"/>
    </location>
    <ligand>
        <name>Zn(2+)</name>
        <dbReference type="ChEBI" id="CHEBI:29105"/>
        <label>1</label>
    </ligand>
</feature>
<dbReference type="EMBL" id="AB197125">
    <property type="protein sequence ID" value="BAD82895.1"/>
    <property type="molecule type" value="Genomic_DNA"/>
</dbReference>
<dbReference type="EMBL" id="CP000868">
    <property type="protein sequence ID" value="ABX16316.1"/>
    <property type="molecule type" value="Genomic_DNA"/>
</dbReference>
<dbReference type="EMBL" id="AP009385">
    <property type="protein sequence ID" value="BAG42570.1"/>
    <property type="molecule type" value="Genomic_DNA"/>
</dbReference>
<dbReference type="RefSeq" id="WP_006417099.1">
    <property type="nucleotide sequence ID" value="NC_010084.1"/>
</dbReference>
<dbReference type="SMR" id="Q5NSW9"/>
<dbReference type="STRING" id="395019.BMULJ_00606"/>
<dbReference type="KEGG" id="bmj:BMULJ_00606"/>
<dbReference type="KEGG" id="bmu:Bmul_2632"/>
<dbReference type="eggNOG" id="COG0484">
    <property type="taxonomic scope" value="Bacteria"/>
</dbReference>
<dbReference type="HOGENOM" id="CLU_017633_0_7_4"/>
<dbReference type="Proteomes" id="UP000008815">
    <property type="component" value="Chromosome 1"/>
</dbReference>
<dbReference type="GO" id="GO:0005737">
    <property type="term" value="C:cytoplasm"/>
    <property type="evidence" value="ECO:0007669"/>
    <property type="project" value="UniProtKB-SubCell"/>
</dbReference>
<dbReference type="GO" id="GO:0005524">
    <property type="term" value="F:ATP binding"/>
    <property type="evidence" value="ECO:0007669"/>
    <property type="project" value="InterPro"/>
</dbReference>
<dbReference type="GO" id="GO:0031072">
    <property type="term" value="F:heat shock protein binding"/>
    <property type="evidence" value="ECO:0007669"/>
    <property type="project" value="InterPro"/>
</dbReference>
<dbReference type="GO" id="GO:0051082">
    <property type="term" value="F:unfolded protein binding"/>
    <property type="evidence" value="ECO:0007669"/>
    <property type="project" value="UniProtKB-UniRule"/>
</dbReference>
<dbReference type="GO" id="GO:0008270">
    <property type="term" value="F:zinc ion binding"/>
    <property type="evidence" value="ECO:0007669"/>
    <property type="project" value="UniProtKB-UniRule"/>
</dbReference>
<dbReference type="GO" id="GO:0051085">
    <property type="term" value="P:chaperone cofactor-dependent protein refolding"/>
    <property type="evidence" value="ECO:0007669"/>
    <property type="project" value="TreeGrafter"/>
</dbReference>
<dbReference type="GO" id="GO:0006260">
    <property type="term" value="P:DNA replication"/>
    <property type="evidence" value="ECO:0007669"/>
    <property type="project" value="UniProtKB-KW"/>
</dbReference>
<dbReference type="GO" id="GO:0042026">
    <property type="term" value="P:protein refolding"/>
    <property type="evidence" value="ECO:0007669"/>
    <property type="project" value="TreeGrafter"/>
</dbReference>
<dbReference type="GO" id="GO:0009408">
    <property type="term" value="P:response to heat"/>
    <property type="evidence" value="ECO:0007669"/>
    <property type="project" value="InterPro"/>
</dbReference>
<dbReference type="CDD" id="cd06257">
    <property type="entry name" value="DnaJ"/>
    <property type="match status" value="1"/>
</dbReference>
<dbReference type="CDD" id="cd10747">
    <property type="entry name" value="DnaJ_C"/>
    <property type="match status" value="1"/>
</dbReference>
<dbReference type="CDD" id="cd10719">
    <property type="entry name" value="DnaJ_zf"/>
    <property type="match status" value="1"/>
</dbReference>
<dbReference type="FunFam" id="1.10.287.110:FF:000031">
    <property type="entry name" value="Molecular chaperone DnaJ"/>
    <property type="match status" value="1"/>
</dbReference>
<dbReference type="FunFam" id="2.10.230.10:FF:000002">
    <property type="entry name" value="Molecular chaperone DnaJ"/>
    <property type="match status" value="1"/>
</dbReference>
<dbReference type="FunFam" id="2.60.260.20:FF:000004">
    <property type="entry name" value="Molecular chaperone DnaJ"/>
    <property type="match status" value="1"/>
</dbReference>
<dbReference type="Gene3D" id="1.10.287.110">
    <property type="entry name" value="DnaJ domain"/>
    <property type="match status" value="1"/>
</dbReference>
<dbReference type="Gene3D" id="2.10.230.10">
    <property type="entry name" value="Heat shock protein DnaJ, cysteine-rich domain"/>
    <property type="match status" value="1"/>
</dbReference>
<dbReference type="Gene3D" id="2.60.260.20">
    <property type="entry name" value="Urease metallochaperone UreE, N-terminal domain"/>
    <property type="match status" value="2"/>
</dbReference>
<dbReference type="HAMAP" id="MF_01152">
    <property type="entry name" value="DnaJ"/>
    <property type="match status" value="1"/>
</dbReference>
<dbReference type="InterPro" id="IPR012724">
    <property type="entry name" value="DnaJ"/>
</dbReference>
<dbReference type="InterPro" id="IPR002939">
    <property type="entry name" value="DnaJ_C"/>
</dbReference>
<dbReference type="InterPro" id="IPR001623">
    <property type="entry name" value="DnaJ_domain"/>
</dbReference>
<dbReference type="InterPro" id="IPR018253">
    <property type="entry name" value="DnaJ_domain_CS"/>
</dbReference>
<dbReference type="InterPro" id="IPR008971">
    <property type="entry name" value="HSP40/DnaJ_pept-bd"/>
</dbReference>
<dbReference type="InterPro" id="IPR001305">
    <property type="entry name" value="HSP_DnaJ_Cys-rich_dom"/>
</dbReference>
<dbReference type="InterPro" id="IPR036410">
    <property type="entry name" value="HSP_DnaJ_Cys-rich_dom_sf"/>
</dbReference>
<dbReference type="InterPro" id="IPR036869">
    <property type="entry name" value="J_dom_sf"/>
</dbReference>
<dbReference type="NCBIfam" id="TIGR02349">
    <property type="entry name" value="DnaJ_bact"/>
    <property type="match status" value="1"/>
</dbReference>
<dbReference type="NCBIfam" id="NF008035">
    <property type="entry name" value="PRK10767.1"/>
    <property type="match status" value="1"/>
</dbReference>
<dbReference type="PANTHER" id="PTHR43096:SF48">
    <property type="entry name" value="CHAPERONE PROTEIN DNAJ"/>
    <property type="match status" value="1"/>
</dbReference>
<dbReference type="PANTHER" id="PTHR43096">
    <property type="entry name" value="DNAJ HOMOLOG 1, MITOCHONDRIAL-RELATED"/>
    <property type="match status" value="1"/>
</dbReference>
<dbReference type="Pfam" id="PF00226">
    <property type="entry name" value="DnaJ"/>
    <property type="match status" value="1"/>
</dbReference>
<dbReference type="Pfam" id="PF01556">
    <property type="entry name" value="DnaJ_C"/>
    <property type="match status" value="1"/>
</dbReference>
<dbReference type="Pfam" id="PF00684">
    <property type="entry name" value="DnaJ_CXXCXGXG"/>
    <property type="match status" value="1"/>
</dbReference>
<dbReference type="PRINTS" id="PR00625">
    <property type="entry name" value="JDOMAIN"/>
</dbReference>
<dbReference type="SMART" id="SM00271">
    <property type="entry name" value="DnaJ"/>
    <property type="match status" value="1"/>
</dbReference>
<dbReference type="SUPFAM" id="SSF46565">
    <property type="entry name" value="Chaperone J-domain"/>
    <property type="match status" value="1"/>
</dbReference>
<dbReference type="SUPFAM" id="SSF57938">
    <property type="entry name" value="DnaJ/Hsp40 cysteine-rich domain"/>
    <property type="match status" value="1"/>
</dbReference>
<dbReference type="SUPFAM" id="SSF49493">
    <property type="entry name" value="HSP40/DnaJ peptide-binding domain"/>
    <property type="match status" value="2"/>
</dbReference>
<dbReference type="PROSITE" id="PS00636">
    <property type="entry name" value="DNAJ_1"/>
    <property type="match status" value="1"/>
</dbReference>
<dbReference type="PROSITE" id="PS50076">
    <property type="entry name" value="DNAJ_2"/>
    <property type="match status" value="1"/>
</dbReference>
<dbReference type="PROSITE" id="PS51188">
    <property type="entry name" value="ZF_CR"/>
    <property type="match status" value="1"/>
</dbReference>
<keyword id="KW-0143">Chaperone</keyword>
<keyword id="KW-0963">Cytoplasm</keyword>
<keyword id="KW-0235">DNA replication</keyword>
<keyword id="KW-0479">Metal-binding</keyword>
<keyword id="KW-1185">Reference proteome</keyword>
<keyword id="KW-0677">Repeat</keyword>
<keyword id="KW-0346">Stress response</keyword>
<keyword id="KW-0862">Zinc</keyword>
<keyword id="KW-0863">Zinc-finger</keyword>
<proteinExistence type="inferred from homology"/>
<comment type="function">
    <text evidence="1">Participates actively in the response to hyperosmotic and heat shock by preventing the aggregation of stress-denatured proteins and by disaggregating proteins, also in an autonomous, DnaK-independent fashion. Unfolded proteins bind initially to DnaJ; upon interaction with the DnaJ-bound protein, DnaK hydrolyzes its bound ATP, resulting in the formation of a stable complex. GrpE releases ADP from DnaK; ATP binding to DnaK triggers the release of the substrate protein, thus completing the reaction cycle. Several rounds of ATP-dependent interactions between DnaJ, DnaK and GrpE are required for fully efficient folding. Also involved, together with DnaK and GrpE, in the DNA replication of plasmids through activation of initiation proteins.</text>
</comment>
<comment type="cofactor">
    <cofactor evidence="1">
        <name>Zn(2+)</name>
        <dbReference type="ChEBI" id="CHEBI:29105"/>
    </cofactor>
    <text evidence="1">Binds 2 Zn(2+) ions per monomer.</text>
</comment>
<comment type="subunit">
    <text evidence="1">Homodimer.</text>
</comment>
<comment type="subcellular location">
    <subcellularLocation>
        <location evidence="1">Cytoplasm</location>
    </subcellularLocation>
</comment>
<comment type="domain">
    <text evidence="1">The J domain is necessary and sufficient to stimulate DnaK ATPase activity. Zinc center 1 plays an important role in the autonomous, DnaK-independent chaperone activity of DnaJ. Zinc center 2 is essential for interaction with DnaK and for DnaJ activity.</text>
</comment>
<comment type="similarity">
    <text evidence="1">Belongs to the DnaJ family.</text>
</comment>
<protein>
    <recommendedName>
        <fullName evidence="1">Chaperone protein DnaJ</fullName>
    </recommendedName>
</protein>
<sequence length="376" mass="40791">MAKRDYYEVLGVAKNASDDEIKKAYRKLAMKYHPDRNPDNKDAEEHFKEVKEAYEMLSDSQKRAAYDQYGHAGVDPNMGGAGAQGFGGFADAFGDIFGDIFGQAAGGRGGRGGPQVYRGADLRYSMEITLEQAAHGYDTQIRVPSWVSCEVCHGSGAKPGTKPETCPTCHGQGTVRMSQGFFSIQQTCPKCHGTGTYIPEPCAHCHGSGKVKETKTLEVKIPAGIDDGMRIRSAGNGEPGINGGPPGDLYVEIHIKPHAVFERDGDDLHCQMPIPFTTAALGGEIEVPTLAGRATFPVPEGTQSGKTFRLRGKGIKGLRSSIAGDLYVHVQVETPVKLTEHQRDLLKQFEKSLAEGGARHSPQSKSWFDRVKSFFE</sequence>